<proteinExistence type="inferred from homology"/>
<reference key="1">
    <citation type="submission" date="2009-01" db="EMBL/GenBank/DDBJ databases">
        <title>Complete sequence of Geobacter sp. FRC-32.</title>
        <authorList>
            <consortium name="US DOE Joint Genome Institute"/>
            <person name="Lucas S."/>
            <person name="Copeland A."/>
            <person name="Lapidus A."/>
            <person name="Glavina del Rio T."/>
            <person name="Dalin E."/>
            <person name="Tice H."/>
            <person name="Bruce D."/>
            <person name="Goodwin L."/>
            <person name="Pitluck S."/>
            <person name="Saunders E."/>
            <person name="Brettin T."/>
            <person name="Detter J.C."/>
            <person name="Han C."/>
            <person name="Larimer F."/>
            <person name="Land M."/>
            <person name="Hauser L."/>
            <person name="Kyrpides N."/>
            <person name="Ovchinnikova G."/>
            <person name="Kostka J."/>
            <person name="Richardson P."/>
        </authorList>
    </citation>
    <scope>NUCLEOTIDE SEQUENCE [LARGE SCALE GENOMIC DNA]</scope>
    <source>
        <strain>DSM 22248 / JCM 15807 / FRC-32</strain>
    </source>
</reference>
<feature type="chain" id="PRO_1000146456" description="Small ribosomal subunit protein uS9">
    <location>
        <begin position="1"/>
        <end position="130"/>
    </location>
</feature>
<comment type="similarity">
    <text evidence="1">Belongs to the universal ribosomal protein uS9 family.</text>
</comment>
<gene>
    <name evidence="1" type="primary">rpsI</name>
    <name type="ordered locus">Geob_3643</name>
</gene>
<sequence length="130" mass="14238">MAAASFYGTGKRKSSIARVWLKPGTGVITVNHKTLDEYFGRETSKMVVKQPLELTENLGKFDIYVTVSGGGDSGQAGAIKHGITKALLEVDAALRTPLKKAGFVTRDSRIKERKKYGKKSARASFQFSKR</sequence>
<accession>B9M6W3</accession>
<name>RS9_GEODF</name>
<evidence type="ECO:0000255" key="1">
    <source>
        <dbReference type="HAMAP-Rule" id="MF_00532"/>
    </source>
</evidence>
<evidence type="ECO:0000305" key="2"/>
<dbReference type="EMBL" id="CP001390">
    <property type="protein sequence ID" value="ACM21984.1"/>
    <property type="molecule type" value="Genomic_DNA"/>
</dbReference>
<dbReference type="RefSeq" id="WP_012648710.1">
    <property type="nucleotide sequence ID" value="NC_011979.1"/>
</dbReference>
<dbReference type="SMR" id="B9M6W3"/>
<dbReference type="STRING" id="316067.Geob_3643"/>
<dbReference type="KEGG" id="geo:Geob_3643"/>
<dbReference type="eggNOG" id="COG0103">
    <property type="taxonomic scope" value="Bacteria"/>
</dbReference>
<dbReference type="HOGENOM" id="CLU_046483_2_1_7"/>
<dbReference type="OrthoDB" id="9803965at2"/>
<dbReference type="Proteomes" id="UP000007721">
    <property type="component" value="Chromosome"/>
</dbReference>
<dbReference type="GO" id="GO:0022627">
    <property type="term" value="C:cytosolic small ribosomal subunit"/>
    <property type="evidence" value="ECO:0007669"/>
    <property type="project" value="TreeGrafter"/>
</dbReference>
<dbReference type="GO" id="GO:0003723">
    <property type="term" value="F:RNA binding"/>
    <property type="evidence" value="ECO:0007669"/>
    <property type="project" value="TreeGrafter"/>
</dbReference>
<dbReference type="GO" id="GO:0003735">
    <property type="term" value="F:structural constituent of ribosome"/>
    <property type="evidence" value="ECO:0007669"/>
    <property type="project" value="InterPro"/>
</dbReference>
<dbReference type="GO" id="GO:0006412">
    <property type="term" value="P:translation"/>
    <property type="evidence" value="ECO:0007669"/>
    <property type="project" value="UniProtKB-UniRule"/>
</dbReference>
<dbReference type="FunFam" id="3.30.230.10:FF:000001">
    <property type="entry name" value="30S ribosomal protein S9"/>
    <property type="match status" value="1"/>
</dbReference>
<dbReference type="Gene3D" id="3.30.230.10">
    <property type="match status" value="1"/>
</dbReference>
<dbReference type="HAMAP" id="MF_00532_B">
    <property type="entry name" value="Ribosomal_uS9_B"/>
    <property type="match status" value="1"/>
</dbReference>
<dbReference type="InterPro" id="IPR020568">
    <property type="entry name" value="Ribosomal_Su5_D2-typ_SF"/>
</dbReference>
<dbReference type="InterPro" id="IPR000754">
    <property type="entry name" value="Ribosomal_uS9"/>
</dbReference>
<dbReference type="InterPro" id="IPR023035">
    <property type="entry name" value="Ribosomal_uS9_bac/plastid"/>
</dbReference>
<dbReference type="InterPro" id="IPR020574">
    <property type="entry name" value="Ribosomal_uS9_CS"/>
</dbReference>
<dbReference type="InterPro" id="IPR014721">
    <property type="entry name" value="Ribsml_uS5_D2-typ_fold_subgr"/>
</dbReference>
<dbReference type="NCBIfam" id="NF001099">
    <property type="entry name" value="PRK00132.1"/>
    <property type="match status" value="1"/>
</dbReference>
<dbReference type="PANTHER" id="PTHR21569">
    <property type="entry name" value="RIBOSOMAL PROTEIN S9"/>
    <property type="match status" value="1"/>
</dbReference>
<dbReference type="PANTHER" id="PTHR21569:SF1">
    <property type="entry name" value="SMALL RIBOSOMAL SUBUNIT PROTEIN US9M"/>
    <property type="match status" value="1"/>
</dbReference>
<dbReference type="Pfam" id="PF00380">
    <property type="entry name" value="Ribosomal_S9"/>
    <property type="match status" value="1"/>
</dbReference>
<dbReference type="SUPFAM" id="SSF54211">
    <property type="entry name" value="Ribosomal protein S5 domain 2-like"/>
    <property type="match status" value="1"/>
</dbReference>
<dbReference type="PROSITE" id="PS00360">
    <property type="entry name" value="RIBOSOMAL_S9"/>
    <property type="match status" value="1"/>
</dbReference>
<keyword id="KW-1185">Reference proteome</keyword>
<keyword id="KW-0687">Ribonucleoprotein</keyword>
<keyword id="KW-0689">Ribosomal protein</keyword>
<organism>
    <name type="scientific">Geotalea daltonii (strain DSM 22248 / JCM 15807 / FRC-32)</name>
    <name type="common">Geobacter daltonii</name>
    <dbReference type="NCBI Taxonomy" id="316067"/>
    <lineage>
        <taxon>Bacteria</taxon>
        <taxon>Pseudomonadati</taxon>
        <taxon>Thermodesulfobacteriota</taxon>
        <taxon>Desulfuromonadia</taxon>
        <taxon>Geobacterales</taxon>
        <taxon>Geobacteraceae</taxon>
        <taxon>Geotalea</taxon>
    </lineage>
</organism>
<protein>
    <recommendedName>
        <fullName evidence="1">Small ribosomal subunit protein uS9</fullName>
    </recommendedName>
    <alternativeName>
        <fullName evidence="2">30S ribosomal protein S9</fullName>
    </alternativeName>
</protein>